<accession>P61340</accession>
<name>EFTS_WOLPM</name>
<feature type="chain" id="PRO_0000161234" description="Elongation factor Ts">
    <location>
        <begin position="1"/>
        <end position="286"/>
    </location>
</feature>
<feature type="region of interest" description="Involved in Mg(2+) ion dislocation from EF-Tu" evidence="1">
    <location>
        <begin position="79"/>
        <end position="82"/>
    </location>
</feature>
<proteinExistence type="inferred from homology"/>
<dbReference type="EMBL" id="AE017196">
    <property type="protein sequence ID" value="AAS14243.1"/>
    <property type="molecule type" value="Genomic_DNA"/>
</dbReference>
<dbReference type="RefSeq" id="WP_010962660.1">
    <property type="nucleotide sequence ID" value="NZ_OX384529.1"/>
</dbReference>
<dbReference type="SMR" id="P61340"/>
<dbReference type="EnsemblBacteria" id="AAS14243">
    <property type="protein sequence ID" value="AAS14243"/>
    <property type="gene ID" value="WD_0531"/>
</dbReference>
<dbReference type="GeneID" id="70036016"/>
<dbReference type="KEGG" id="wol:WD_0531"/>
<dbReference type="eggNOG" id="COG0264">
    <property type="taxonomic scope" value="Bacteria"/>
</dbReference>
<dbReference type="Proteomes" id="UP000008215">
    <property type="component" value="Chromosome"/>
</dbReference>
<dbReference type="GO" id="GO:0005737">
    <property type="term" value="C:cytoplasm"/>
    <property type="evidence" value="ECO:0007669"/>
    <property type="project" value="UniProtKB-SubCell"/>
</dbReference>
<dbReference type="GO" id="GO:0003746">
    <property type="term" value="F:translation elongation factor activity"/>
    <property type="evidence" value="ECO:0007669"/>
    <property type="project" value="UniProtKB-UniRule"/>
</dbReference>
<dbReference type="CDD" id="cd14275">
    <property type="entry name" value="UBA_EF-Ts"/>
    <property type="match status" value="1"/>
</dbReference>
<dbReference type="FunFam" id="1.10.8.10:FF:000001">
    <property type="entry name" value="Elongation factor Ts"/>
    <property type="match status" value="1"/>
</dbReference>
<dbReference type="Gene3D" id="1.10.286.20">
    <property type="match status" value="1"/>
</dbReference>
<dbReference type="Gene3D" id="1.10.8.10">
    <property type="entry name" value="DNA helicase RuvA subunit, C-terminal domain"/>
    <property type="match status" value="1"/>
</dbReference>
<dbReference type="Gene3D" id="3.30.479.20">
    <property type="entry name" value="Elongation factor Ts, dimerisation domain"/>
    <property type="match status" value="2"/>
</dbReference>
<dbReference type="HAMAP" id="MF_00050">
    <property type="entry name" value="EF_Ts"/>
    <property type="match status" value="1"/>
</dbReference>
<dbReference type="InterPro" id="IPR036402">
    <property type="entry name" value="EF-Ts_dimer_sf"/>
</dbReference>
<dbReference type="InterPro" id="IPR001816">
    <property type="entry name" value="Transl_elong_EFTs/EF1B"/>
</dbReference>
<dbReference type="InterPro" id="IPR014039">
    <property type="entry name" value="Transl_elong_EFTs/EF1B_dimer"/>
</dbReference>
<dbReference type="InterPro" id="IPR018101">
    <property type="entry name" value="Transl_elong_Ts_CS"/>
</dbReference>
<dbReference type="InterPro" id="IPR009060">
    <property type="entry name" value="UBA-like_sf"/>
</dbReference>
<dbReference type="NCBIfam" id="TIGR00116">
    <property type="entry name" value="tsf"/>
    <property type="match status" value="1"/>
</dbReference>
<dbReference type="PANTHER" id="PTHR11741">
    <property type="entry name" value="ELONGATION FACTOR TS"/>
    <property type="match status" value="1"/>
</dbReference>
<dbReference type="PANTHER" id="PTHR11741:SF0">
    <property type="entry name" value="ELONGATION FACTOR TS, MITOCHONDRIAL"/>
    <property type="match status" value="1"/>
</dbReference>
<dbReference type="Pfam" id="PF00889">
    <property type="entry name" value="EF_TS"/>
    <property type="match status" value="1"/>
</dbReference>
<dbReference type="SUPFAM" id="SSF54713">
    <property type="entry name" value="Elongation factor Ts (EF-Ts), dimerisation domain"/>
    <property type="match status" value="2"/>
</dbReference>
<dbReference type="SUPFAM" id="SSF46934">
    <property type="entry name" value="UBA-like"/>
    <property type="match status" value="1"/>
</dbReference>
<dbReference type="PROSITE" id="PS01126">
    <property type="entry name" value="EF_TS_1"/>
    <property type="match status" value="1"/>
</dbReference>
<dbReference type="PROSITE" id="PS01127">
    <property type="entry name" value="EF_TS_2"/>
    <property type="match status" value="1"/>
</dbReference>
<keyword id="KW-0963">Cytoplasm</keyword>
<keyword id="KW-0251">Elongation factor</keyword>
<keyword id="KW-0648">Protein biosynthesis</keyword>
<protein>
    <recommendedName>
        <fullName evidence="1">Elongation factor Ts</fullName>
        <shortName evidence="1">EF-Ts</shortName>
    </recommendedName>
</protein>
<organism>
    <name type="scientific">Wolbachia pipientis wMel</name>
    <dbReference type="NCBI Taxonomy" id="163164"/>
    <lineage>
        <taxon>Bacteria</taxon>
        <taxon>Pseudomonadati</taxon>
        <taxon>Pseudomonadota</taxon>
        <taxon>Alphaproteobacteria</taxon>
        <taxon>Rickettsiales</taxon>
        <taxon>Anaplasmataceae</taxon>
        <taxon>Wolbachieae</taxon>
        <taxon>Wolbachia</taxon>
    </lineage>
</organism>
<sequence>MKMNPDDIRELRDRTGLGLSDCKKALEECDGDIKKAVDKLRTIGLAKADKKSDRVASDGLVAMCLTENCGVLIELNCETDFVARNEKFIELVLNLASIAHQERCTSVDELKNAKYESIGTVQEAIMNGTSVLGEKLELSKLCYLEAKDGVIAGYVHGDVCGLGKIGALIALQSSGDKAKLQEIGKQIAMHVVAMKPEALSIDDLDQMKLNNERSIIEEQVRSLNKPEEVAKKIVDGRMAKYYEEVVLLEQKFIKDDKMKISDFIKSSELSAVKLSNYELLVLGDAD</sequence>
<comment type="function">
    <text evidence="1">Associates with the EF-Tu.GDP complex and induces the exchange of GDP to GTP. It remains bound to the aminoacyl-tRNA.EF-Tu.GTP complex up to the GTP hydrolysis stage on the ribosome.</text>
</comment>
<comment type="subcellular location">
    <subcellularLocation>
        <location evidence="1">Cytoplasm</location>
    </subcellularLocation>
</comment>
<comment type="similarity">
    <text evidence="1">Belongs to the EF-Ts family.</text>
</comment>
<evidence type="ECO:0000255" key="1">
    <source>
        <dbReference type="HAMAP-Rule" id="MF_00050"/>
    </source>
</evidence>
<reference key="1">
    <citation type="journal article" date="2004" name="PLoS Biol.">
        <title>Phylogenomics of the reproductive parasite Wolbachia pipientis wMel: a streamlined genome overrun by mobile genetic elements.</title>
        <authorList>
            <person name="Wu M."/>
            <person name="Sun L.V."/>
            <person name="Vamathevan J.J."/>
            <person name="Riegler M."/>
            <person name="DeBoy R.T."/>
            <person name="Brownlie J.C."/>
            <person name="McGraw E.A."/>
            <person name="Martin W."/>
            <person name="Esser C."/>
            <person name="Ahmadinejad N."/>
            <person name="Wiegand C."/>
            <person name="Madupu R."/>
            <person name="Beanan M.J."/>
            <person name="Brinkac L.M."/>
            <person name="Daugherty S.C."/>
            <person name="Durkin A.S."/>
            <person name="Kolonay J.F."/>
            <person name="Nelson W.C."/>
            <person name="Mohamoud Y."/>
            <person name="Lee P."/>
            <person name="Berry K.J."/>
            <person name="Young M.B."/>
            <person name="Utterback T.R."/>
            <person name="Weidman J.F."/>
            <person name="Nierman W.C."/>
            <person name="Paulsen I.T."/>
            <person name="Nelson K.E."/>
            <person name="Tettelin H."/>
            <person name="O'Neill S.L."/>
            <person name="Eisen J.A."/>
        </authorList>
    </citation>
    <scope>NUCLEOTIDE SEQUENCE [LARGE SCALE GENOMIC DNA]</scope>
</reference>
<gene>
    <name evidence="1" type="primary">tsf</name>
    <name type="ordered locus">WD_0531</name>
</gene>